<reference evidence="6" key="1">
    <citation type="journal article" date="1998" name="Science">
        <title>Genome sequence of the nematode C. elegans: a platform for investigating biology.</title>
        <authorList>
            <consortium name="The C. elegans sequencing consortium"/>
        </authorList>
    </citation>
    <scope>NUCLEOTIDE SEQUENCE [LARGE SCALE GENOMIC DNA]</scope>
    <source>
        <strain evidence="6">Bristol N2</strain>
    </source>
</reference>
<reference evidence="4" key="2">
    <citation type="journal article" date="2010" name="Proc. Natl. Acad. Sci. U.S.A.">
        <title>bZIP transcription factor zip-2 mediates an early response to Pseudomonas aeruginosa infection in Caenorhabditis elegans.</title>
        <authorList>
            <person name="Estes K.A."/>
            <person name="Dunbar T.L."/>
            <person name="Powell J.R."/>
            <person name="Ausubel F.M."/>
            <person name="Troemel E.R."/>
        </authorList>
    </citation>
    <scope>FUNCTION</scope>
    <scope>INDUCTION BY P.AERUGINOSA INFECTION</scope>
</reference>
<reference evidence="4" key="3">
    <citation type="journal article" date="2012" name="Cell Host Microbe">
        <title>C. elegans detects pathogen-induced translational inhibition to activate immune signaling.</title>
        <authorList>
            <person name="Dunbar T.L."/>
            <person name="Yan Z."/>
            <person name="Balla K.M."/>
            <person name="Smelkinson M.G."/>
            <person name="Troemel E.R."/>
        </authorList>
    </citation>
    <scope>FUNCTION</scope>
    <scope>INDUCTION BY P.AERUGINOSA INFECTION; EXOTOXIN A AND CYCLOHEXIMIDE</scope>
</reference>
<sequence>MFDEFYFRKSLRPRESQNHVRNAACEYILKFMKTEGTIVKTYHLGSSLEPWGRKFHERIDRTVFDQDLTPFVKYTLNKKKRWEAEGNPDILYGLQRSYQNMGVMVAERVSLRSTPHYCIVSINNYYRNFFDQFPIRHLHQLQDHNYQCQSTNSIRGQPFKSLQPENRTPTQVTGHQQESSANVSVAYHIITPPKNYEVLRNKDFRVGHSDRNGIRTIARRRRFQFMKEAVFDLKNEILEDFGDSDDDDENEILLCEESCGPRKFYNLHDHLVKSNHNE</sequence>
<name>IRG2_CAEEL</name>
<organism evidence="6">
    <name type="scientific">Caenorhabditis elegans</name>
    <dbReference type="NCBI Taxonomy" id="6239"/>
    <lineage>
        <taxon>Eukaryota</taxon>
        <taxon>Metazoa</taxon>
        <taxon>Ecdysozoa</taxon>
        <taxon>Nematoda</taxon>
        <taxon>Chromadorea</taxon>
        <taxon>Rhabditida</taxon>
        <taxon>Rhabditina</taxon>
        <taxon>Rhabditomorpha</taxon>
        <taxon>Rhabditoidea</taxon>
        <taxon>Rhabditidae</taxon>
        <taxon>Peloderinae</taxon>
        <taxon>Caenorhabditis</taxon>
    </lineage>
</organism>
<gene>
    <name evidence="7" type="primary">irg-2</name>
    <name evidence="7" type="ORF">C49G7.5</name>
</gene>
<protein>
    <recommendedName>
        <fullName>Protein irg-2</fullName>
    </recommendedName>
    <alternativeName>
        <fullName evidence="5">Infection response protein 2</fullName>
    </alternativeName>
</protein>
<comment type="function">
    <text evidence="2 3">Plays a role in innate immunity by conferring resistance to virulent strains of the Gram-negative bacterium P.aeruginosa via the zip-2 pathway and independent of the pmk-1 p38MAPK pathway (PubMed:20133860). Induced as part of several immune responses to translational inhibition arising from endocytosis of ToxA during P.aeruginosa infection or exposure to exogenous cycloheximide (PubMed:22520465).</text>
</comment>
<comment type="induction">
    <text evidence="2 3">Induction by P.aeruginosa is dependent on zip-2 but independent of several immunity-related pathways including pmk-1 p38MAPK, dbl-1 TGF-beta, and kgb-1 JNK pathways (PubMed:20133860). Induced, in a zip-2 dependent manner, by translation inhibitors such as cycloheximide and exogenous or P.aeruginosa-derived ToxA (PubMed:22520465).</text>
</comment>
<keyword id="KW-0391">Immunity</keyword>
<keyword id="KW-0399">Innate immunity</keyword>
<keyword id="KW-1185">Reference proteome</keyword>
<proteinExistence type="evidence at transcript level"/>
<accession>O16224</accession>
<dbReference type="EMBL" id="BX284605">
    <property type="protein sequence ID" value="CCD67689.1"/>
    <property type="molecule type" value="Genomic_DNA"/>
</dbReference>
<dbReference type="PIR" id="T03867">
    <property type="entry name" value="T03867"/>
</dbReference>
<dbReference type="RefSeq" id="NP_504128.1">
    <property type="nucleotide sequence ID" value="NM_071727.6"/>
</dbReference>
<dbReference type="FunCoup" id="O16224">
    <property type="interactions" value="128"/>
</dbReference>
<dbReference type="STRING" id="6239.C49G7.5.1"/>
<dbReference type="PaxDb" id="6239-C49G7.5"/>
<dbReference type="EnsemblMetazoa" id="C49G7.5.1">
    <property type="protein sequence ID" value="C49G7.5.1"/>
    <property type="gene ID" value="WBGene00016783"/>
</dbReference>
<dbReference type="GeneID" id="183619"/>
<dbReference type="KEGG" id="cel:CELE_C49G7.5"/>
<dbReference type="UCSC" id="C49G7.5">
    <property type="organism name" value="c. elegans"/>
</dbReference>
<dbReference type="AGR" id="WB:WBGene00016783"/>
<dbReference type="CTD" id="183619"/>
<dbReference type="WormBase" id="C49G7.5">
    <property type="protein sequence ID" value="CE08863"/>
    <property type="gene ID" value="WBGene00016783"/>
    <property type="gene designation" value="irg-2"/>
</dbReference>
<dbReference type="eggNOG" id="ENOG502TKK2">
    <property type="taxonomic scope" value="Eukaryota"/>
</dbReference>
<dbReference type="GeneTree" id="ENSGT00530000065131"/>
<dbReference type="HOGENOM" id="CLU_076183_0_0_1"/>
<dbReference type="InParanoid" id="O16224"/>
<dbReference type="OMA" id="ANSEEPM"/>
<dbReference type="OrthoDB" id="5779082at2759"/>
<dbReference type="PhylomeDB" id="O16224"/>
<dbReference type="Proteomes" id="UP000001940">
    <property type="component" value="Chromosome V"/>
</dbReference>
<dbReference type="Bgee" id="WBGene00016783">
    <property type="expression patterns" value="Expressed in pharyngeal muscle cell (C elegans) and 2 other cell types or tissues"/>
</dbReference>
<dbReference type="GO" id="GO:0140367">
    <property type="term" value="P:antibacterial innate immune response"/>
    <property type="evidence" value="ECO:0000270"/>
    <property type="project" value="WormBase"/>
</dbReference>
<dbReference type="GO" id="GO:0050829">
    <property type="term" value="P:defense response to Gram-negative bacterium"/>
    <property type="evidence" value="ECO:0000270"/>
    <property type="project" value="WormBase"/>
</dbReference>
<dbReference type="GO" id="GO:0045087">
    <property type="term" value="P:innate immune response"/>
    <property type="evidence" value="ECO:0007007"/>
    <property type="project" value="WormBase"/>
</dbReference>
<evidence type="ECO:0000256" key="1">
    <source>
        <dbReference type="SAM" id="MobiDB-lite"/>
    </source>
</evidence>
<evidence type="ECO:0000269" key="2">
    <source>
    </source>
</evidence>
<evidence type="ECO:0000269" key="3">
    <source>
    </source>
</evidence>
<evidence type="ECO:0000305" key="4"/>
<evidence type="ECO:0000305" key="5">
    <source>
    </source>
</evidence>
<evidence type="ECO:0000312" key="6">
    <source>
        <dbReference type="Proteomes" id="UP000001940"/>
    </source>
</evidence>
<evidence type="ECO:0000312" key="7">
    <source>
        <dbReference type="WormBase" id="C49G7.5"/>
    </source>
</evidence>
<feature type="chain" id="PRO_0000461572" description="Protein irg-2">
    <location>
        <begin position="1"/>
        <end position="278"/>
    </location>
</feature>
<feature type="region of interest" description="Disordered" evidence="1">
    <location>
        <begin position="152"/>
        <end position="179"/>
    </location>
</feature>
<feature type="compositionally biased region" description="Polar residues" evidence="1">
    <location>
        <begin position="163"/>
        <end position="179"/>
    </location>
</feature>